<evidence type="ECO:0000255" key="1">
    <source>
        <dbReference type="HAMAP-Rule" id="MF_00149"/>
    </source>
</evidence>
<evidence type="ECO:0000256" key="2">
    <source>
        <dbReference type="SAM" id="MobiDB-lite"/>
    </source>
</evidence>
<accession>A9MFP2</accession>
<keyword id="KW-0227">DNA damage</keyword>
<keyword id="KW-0234">DNA repair</keyword>
<keyword id="KW-1185">Reference proteome</keyword>
<comment type="function">
    <text evidence="1">This protein is involved in the repair of mismatches in DNA. It is required for dam-dependent methyl-directed DNA mismatch repair. May act as a 'molecular matchmaker', a protein that promotes the formation of a stable complex between two or more DNA-binding proteins in an ATP-dependent manner without itself being part of a final effector complex.</text>
</comment>
<comment type="similarity">
    <text evidence="1">Belongs to the DNA mismatch repair MutL/HexB family.</text>
</comment>
<protein>
    <recommendedName>
        <fullName evidence="1">DNA mismatch repair protein MutL</fullName>
    </recommendedName>
</protein>
<sequence length="618" mass="67821">MPIQVLPPQLANQIAAGEVVERPASVVKELVENSLDAGATRIDIDIERGGAKLIRIRDNGCGIKKEELALALARHATSKIASLDDLEAIISLGFRGEALASISSVSRLTLTSRTAEQSEAWQAYAEGRDMDVTVKPAAHPVGTTLEVLDLFYNTPARRKFMRTEKTEFNHIDEIIRRIALARFDVTLNLSHNGKLVRQYRAVARDGQKERRLGAICGTPFLEQALAIEWQHGDLTLRGWVADPNHTTTALAEIQYCYVNGRMMRDRLINHAIRQACEEKLGADQQPAFVLYLEIDPHQVDVNVHPAKHEVRFHQSRLVHDFIYQGVLSVLQQQTETTLPLEEIAPAPRHVPENRIAAGRNHFAEPVVPTAAREPATPRYSGGASGGSGGRQSVGGWSHAQPGYQKQQGEVYRALLQTPAASSTPEPVAPALDGHSQSFGRVLTIVGGDCALLEHGGNIQLLSLPVAERWLRQAQLTPGQSPVCAQPLLIPLRLKVSADEKASLQKAQPFLGELGIEFQSDAQHVTIRAVPLPLRQQNLQILIPELIGYLAQQTTFATVNIAQWIARNVQSEHPQWSMAQAISLLADVERLCPQLVKAPPGGLLQPVDLHSAMNALKHE</sequence>
<dbReference type="EMBL" id="CP000880">
    <property type="protein sequence ID" value="ABX23108.1"/>
    <property type="molecule type" value="Genomic_DNA"/>
</dbReference>
<dbReference type="SMR" id="A9MFP2"/>
<dbReference type="STRING" id="41514.SARI_03272"/>
<dbReference type="KEGG" id="ses:SARI_03272"/>
<dbReference type="HOGENOM" id="CLU_004131_5_1_6"/>
<dbReference type="Proteomes" id="UP000002084">
    <property type="component" value="Chromosome"/>
</dbReference>
<dbReference type="GO" id="GO:0032300">
    <property type="term" value="C:mismatch repair complex"/>
    <property type="evidence" value="ECO:0007669"/>
    <property type="project" value="InterPro"/>
</dbReference>
<dbReference type="GO" id="GO:0005524">
    <property type="term" value="F:ATP binding"/>
    <property type="evidence" value="ECO:0007669"/>
    <property type="project" value="InterPro"/>
</dbReference>
<dbReference type="GO" id="GO:0016887">
    <property type="term" value="F:ATP hydrolysis activity"/>
    <property type="evidence" value="ECO:0007669"/>
    <property type="project" value="InterPro"/>
</dbReference>
<dbReference type="GO" id="GO:0140664">
    <property type="term" value="F:ATP-dependent DNA damage sensor activity"/>
    <property type="evidence" value="ECO:0007669"/>
    <property type="project" value="InterPro"/>
</dbReference>
<dbReference type="GO" id="GO:0030983">
    <property type="term" value="F:mismatched DNA binding"/>
    <property type="evidence" value="ECO:0007669"/>
    <property type="project" value="InterPro"/>
</dbReference>
<dbReference type="GO" id="GO:0006298">
    <property type="term" value="P:mismatch repair"/>
    <property type="evidence" value="ECO:0007669"/>
    <property type="project" value="UniProtKB-UniRule"/>
</dbReference>
<dbReference type="CDD" id="cd16926">
    <property type="entry name" value="HATPase_MutL-MLH-PMS-like"/>
    <property type="match status" value="1"/>
</dbReference>
<dbReference type="CDD" id="cd03482">
    <property type="entry name" value="MutL_Trans_MutL"/>
    <property type="match status" value="1"/>
</dbReference>
<dbReference type="FunFam" id="3.30.230.10:FF:000013">
    <property type="entry name" value="DNA mismatch repair endonuclease MutL"/>
    <property type="match status" value="1"/>
</dbReference>
<dbReference type="FunFam" id="3.30.565.10:FF:000003">
    <property type="entry name" value="DNA mismatch repair endonuclease MutL"/>
    <property type="match status" value="1"/>
</dbReference>
<dbReference type="FunFam" id="3.30.1370.100:FF:000002">
    <property type="entry name" value="DNA mismatch repair protein MutL"/>
    <property type="match status" value="1"/>
</dbReference>
<dbReference type="Gene3D" id="3.30.230.10">
    <property type="match status" value="1"/>
</dbReference>
<dbReference type="Gene3D" id="3.30.565.10">
    <property type="entry name" value="Histidine kinase-like ATPase, C-terminal domain"/>
    <property type="match status" value="1"/>
</dbReference>
<dbReference type="Gene3D" id="3.30.1540.20">
    <property type="entry name" value="MutL, C-terminal domain, dimerisation subdomain"/>
    <property type="match status" value="1"/>
</dbReference>
<dbReference type="Gene3D" id="3.30.1370.100">
    <property type="entry name" value="MutL, C-terminal domain, regulatory subdomain"/>
    <property type="match status" value="1"/>
</dbReference>
<dbReference type="HAMAP" id="MF_00149">
    <property type="entry name" value="DNA_mis_repair"/>
    <property type="match status" value="1"/>
</dbReference>
<dbReference type="InterPro" id="IPR014762">
    <property type="entry name" value="DNA_mismatch_repair_CS"/>
</dbReference>
<dbReference type="InterPro" id="IPR020667">
    <property type="entry name" value="DNA_mismatch_repair_MutL"/>
</dbReference>
<dbReference type="InterPro" id="IPR013507">
    <property type="entry name" value="DNA_mismatch_S5_2-like"/>
</dbReference>
<dbReference type="InterPro" id="IPR036890">
    <property type="entry name" value="HATPase_C_sf"/>
</dbReference>
<dbReference type="InterPro" id="IPR002099">
    <property type="entry name" value="MutL/Mlh/PMS"/>
</dbReference>
<dbReference type="InterPro" id="IPR038973">
    <property type="entry name" value="MutL/Mlh/Pms-like"/>
</dbReference>
<dbReference type="InterPro" id="IPR014790">
    <property type="entry name" value="MutL_C"/>
</dbReference>
<dbReference type="InterPro" id="IPR042120">
    <property type="entry name" value="MutL_C_dimsub"/>
</dbReference>
<dbReference type="InterPro" id="IPR042121">
    <property type="entry name" value="MutL_C_regsub"/>
</dbReference>
<dbReference type="InterPro" id="IPR037198">
    <property type="entry name" value="MutL_C_sf"/>
</dbReference>
<dbReference type="InterPro" id="IPR020568">
    <property type="entry name" value="Ribosomal_Su5_D2-typ_SF"/>
</dbReference>
<dbReference type="InterPro" id="IPR014721">
    <property type="entry name" value="Ribsml_uS5_D2-typ_fold_subgr"/>
</dbReference>
<dbReference type="NCBIfam" id="TIGR00585">
    <property type="entry name" value="mutl"/>
    <property type="match status" value="1"/>
</dbReference>
<dbReference type="NCBIfam" id="NF000948">
    <property type="entry name" value="PRK00095.1-1"/>
    <property type="match status" value="1"/>
</dbReference>
<dbReference type="PANTHER" id="PTHR10073">
    <property type="entry name" value="DNA MISMATCH REPAIR PROTEIN MLH, PMS, MUTL"/>
    <property type="match status" value="1"/>
</dbReference>
<dbReference type="PANTHER" id="PTHR10073:SF12">
    <property type="entry name" value="DNA MISMATCH REPAIR PROTEIN MLH1"/>
    <property type="match status" value="1"/>
</dbReference>
<dbReference type="Pfam" id="PF01119">
    <property type="entry name" value="DNA_mis_repair"/>
    <property type="match status" value="1"/>
</dbReference>
<dbReference type="Pfam" id="PF13589">
    <property type="entry name" value="HATPase_c_3"/>
    <property type="match status" value="1"/>
</dbReference>
<dbReference type="Pfam" id="PF08676">
    <property type="entry name" value="MutL_C"/>
    <property type="match status" value="1"/>
</dbReference>
<dbReference type="SMART" id="SM01340">
    <property type="entry name" value="DNA_mis_repair"/>
    <property type="match status" value="1"/>
</dbReference>
<dbReference type="SMART" id="SM00853">
    <property type="entry name" value="MutL_C"/>
    <property type="match status" value="1"/>
</dbReference>
<dbReference type="SUPFAM" id="SSF55874">
    <property type="entry name" value="ATPase domain of HSP90 chaperone/DNA topoisomerase II/histidine kinase"/>
    <property type="match status" value="1"/>
</dbReference>
<dbReference type="SUPFAM" id="SSF118116">
    <property type="entry name" value="DNA mismatch repair protein MutL"/>
    <property type="match status" value="1"/>
</dbReference>
<dbReference type="SUPFAM" id="SSF54211">
    <property type="entry name" value="Ribosomal protein S5 domain 2-like"/>
    <property type="match status" value="1"/>
</dbReference>
<dbReference type="PROSITE" id="PS00058">
    <property type="entry name" value="DNA_MISMATCH_REPAIR_1"/>
    <property type="match status" value="1"/>
</dbReference>
<proteinExistence type="inferred from homology"/>
<name>MUTL_SALAR</name>
<gene>
    <name evidence="1" type="primary">mutL</name>
    <name type="ordered locus">SARI_03272</name>
</gene>
<feature type="chain" id="PRO_1000076707" description="DNA mismatch repair protein MutL">
    <location>
        <begin position="1"/>
        <end position="618"/>
    </location>
</feature>
<feature type="region of interest" description="Disordered" evidence="2">
    <location>
        <begin position="371"/>
        <end position="401"/>
    </location>
</feature>
<feature type="compositionally biased region" description="Gly residues" evidence="2">
    <location>
        <begin position="382"/>
        <end position="392"/>
    </location>
</feature>
<organism>
    <name type="scientific">Salmonella arizonae (strain ATCC BAA-731 / CDC346-86 / RSK2980)</name>
    <dbReference type="NCBI Taxonomy" id="41514"/>
    <lineage>
        <taxon>Bacteria</taxon>
        <taxon>Pseudomonadati</taxon>
        <taxon>Pseudomonadota</taxon>
        <taxon>Gammaproteobacteria</taxon>
        <taxon>Enterobacterales</taxon>
        <taxon>Enterobacteriaceae</taxon>
        <taxon>Salmonella</taxon>
    </lineage>
</organism>
<reference key="1">
    <citation type="submission" date="2007-11" db="EMBL/GenBank/DDBJ databases">
        <authorList>
            <consortium name="The Salmonella enterica serovar Arizonae Genome Sequencing Project"/>
            <person name="McClelland M."/>
            <person name="Sanderson E.K."/>
            <person name="Porwollik S."/>
            <person name="Spieth J."/>
            <person name="Clifton W.S."/>
            <person name="Fulton R."/>
            <person name="Chunyan W."/>
            <person name="Wollam A."/>
            <person name="Shah N."/>
            <person name="Pepin K."/>
            <person name="Bhonagiri V."/>
            <person name="Nash W."/>
            <person name="Johnson M."/>
            <person name="Thiruvilangam P."/>
            <person name="Wilson R."/>
        </authorList>
    </citation>
    <scope>NUCLEOTIDE SEQUENCE [LARGE SCALE GENOMIC DNA]</scope>
    <source>
        <strain>ATCC BAA-731 / CDC346-86 / RSK2980</strain>
    </source>
</reference>